<feature type="chain" id="PRO_0000287118" description="ADP-ribosylation factor-like protein 2-binding protein">
    <location>
        <begin position="1"/>
        <end position="156"/>
    </location>
</feature>
<evidence type="ECO:0000250" key="1"/>
<evidence type="ECO:0000305" key="2"/>
<organism>
    <name type="scientific">Gallus gallus</name>
    <name type="common">Chicken</name>
    <dbReference type="NCBI Taxonomy" id="9031"/>
    <lineage>
        <taxon>Eukaryota</taxon>
        <taxon>Metazoa</taxon>
        <taxon>Chordata</taxon>
        <taxon>Craniata</taxon>
        <taxon>Vertebrata</taxon>
        <taxon>Euteleostomi</taxon>
        <taxon>Archelosauria</taxon>
        <taxon>Archosauria</taxon>
        <taxon>Dinosauria</taxon>
        <taxon>Saurischia</taxon>
        <taxon>Theropoda</taxon>
        <taxon>Coelurosauria</taxon>
        <taxon>Aves</taxon>
        <taxon>Neognathae</taxon>
        <taxon>Galloanserae</taxon>
        <taxon>Galliformes</taxon>
        <taxon>Phasianidae</taxon>
        <taxon>Phasianinae</taxon>
        <taxon>Gallus</taxon>
    </lineage>
</organism>
<accession>Q5ZKW5</accession>
<protein>
    <recommendedName>
        <fullName>ADP-ribosylation factor-like protein 2-binding protein</fullName>
        <shortName>ARF-like 2-binding protein</shortName>
    </recommendedName>
</protein>
<dbReference type="EMBL" id="AJ719969">
    <property type="protein sequence ID" value="CAG31628.1"/>
    <property type="molecule type" value="mRNA"/>
</dbReference>
<dbReference type="RefSeq" id="NP_001007971.1">
    <property type="nucleotide sequence ID" value="NM_001007970.1"/>
</dbReference>
<dbReference type="RefSeq" id="XP_015147835.1">
    <property type="nucleotide sequence ID" value="XM_015292349.1"/>
</dbReference>
<dbReference type="RefSeq" id="XP_015157294.1">
    <property type="nucleotide sequence ID" value="XM_015301808.1"/>
</dbReference>
<dbReference type="SMR" id="Q5ZKW5"/>
<dbReference type="FunCoup" id="Q5ZKW5">
    <property type="interactions" value="749"/>
</dbReference>
<dbReference type="STRING" id="9031.ENSGALP00000067034"/>
<dbReference type="PaxDb" id="9031-ENSGALP00000042358"/>
<dbReference type="GeneID" id="426495"/>
<dbReference type="KEGG" id="gga:426495"/>
<dbReference type="CTD" id="23568"/>
<dbReference type="VEuPathDB" id="HostDB:geneid_426495"/>
<dbReference type="eggNOG" id="ENOG502RYJD">
    <property type="taxonomic scope" value="Eukaryota"/>
</dbReference>
<dbReference type="HOGENOM" id="CLU_116781_0_0_1"/>
<dbReference type="InParanoid" id="Q5ZKW5"/>
<dbReference type="OMA" id="CILEIIM"/>
<dbReference type="OrthoDB" id="302784at2759"/>
<dbReference type="PhylomeDB" id="Q5ZKW5"/>
<dbReference type="PRO" id="PR:Q5ZKW5"/>
<dbReference type="Proteomes" id="UP000000539">
    <property type="component" value="Chromosome 11"/>
</dbReference>
<dbReference type="Bgee" id="ENSGALG00000049492">
    <property type="expression patterns" value="Expressed in spermatid and 13 other cell types or tissues"/>
</dbReference>
<dbReference type="GO" id="GO:0005813">
    <property type="term" value="C:centrosome"/>
    <property type="evidence" value="ECO:0007669"/>
    <property type="project" value="UniProtKB-SubCell"/>
</dbReference>
<dbReference type="GO" id="GO:0005929">
    <property type="term" value="C:cilium"/>
    <property type="evidence" value="ECO:0007669"/>
    <property type="project" value="UniProtKB-KW"/>
</dbReference>
<dbReference type="GO" id="GO:0005758">
    <property type="term" value="C:mitochondrial intermembrane space"/>
    <property type="evidence" value="ECO:0000318"/>
    <property type="project" value="GO_Central"/>
</dbReference>
<dbReference type="GO" id="GO:0005634">
    <property type="term" value="C:nucleus"/>
    <property type="evidence" value="ECO:0007669"/>
    <property type="project" value="UniProtKB-SubCell"/>
</dbReference>
<dbReference type="GO" id="GO:0005819">
    <property type="term" value="C:spindle"/>
    <property type="evidence" value="ECO:0007669"/>
    <property type="project" value="UniProtKB-SubCell"/>
</dbReference>
<dbReference type="GO" id="GO:0003713">
    <property type="term" value="F:transcription coactivator activity"/>
    <property type="evidence" value="ECO:0000250"/>
    <property type="project" value="UniProtKB"/>
</dbReference>
<dbReference type="GO" id="GO:0051457">
    <property type="term" value="P:maintenance of protein location in nucleus"/>
    <property type="evidence" value="ECO:0000250"/>
    <property type="project" value="UniProtKB"/>
</dbReference>
<dbReference type="GO" id="GO:0042531">
    <property type="term" value="P:positive regulation of tyrosine phosphorylation of STAT protein"/>
    <property type="evidence" value="ECO:0000250"/>
    <property type="project" value="UniProtKB"/>
</dbReference>
<dbReference type="FunFam" id="1.20.1520.10:FF:000002">
    <property type="entry name" value="ADP-ribosylation factor-like protein 2-binding protein isoform X1"/>
    <property type="match status" value="1"/>
</dbReference>
<dbReference type="Gene3D" id="1.20.1520.10">
    <property type="entry name" value="ADP-ribosylation factor-like 2-binding protein, domain"/>
    <property type="match status" value="1"/>
</dbReference>
<dbReference type="InterPro" id="IPR038849">
    <property type="entry name" value="ARL2BP"/>
</dbReference>
<dbReference type="InterPro" id="IPR023379">
    <property type="entry name" value="BART_dom"/>
</dbReference>
<dbReference type="InterPro" id="IPR042541">
    <property type="entry name" value="BART_sf"/>
</dbReference>
<dbReference type="PANTHER" id="PTHR15487">
    <property type="entry name" value="ADP-RIBOSYLATION FACTOR-LIKE PROTEIN 2-BINDING PROTEIN"/>
    <property type="match status" value="1"/>
</dbReference>
<dbReference type="PANTHER" id="PTHR15487:SF4">
    <property type="entry name" value="ADP-RIBOSYLATION FACTOR-LIKE PROTEIN 2-BINDING PROTEIN"/>
    <property type="match status" value="1"/>
</dbReference>
<dbReference type="Pfam" id="PF11527">
    <property type="entry name" value="ARL2_Bind_BART"/>
    <property type="match status" value="1"/>
</dbReference>
<keyword id="KW-0966">Cell projection</keyword>
<keyword id="KW-0969">Cilium</keyword>
<keyword id="KW-0963">Cytoplasm</keyword>
<keyword id="KW-0206">Cytoskeleton</keyword>
<keyword id="KW-0496">Mitochondrion</keyword>
<keyword id="KW-0539">Nucleus</keyword>
<keyword id="KW-1185">Reference proteome</keyword>
<sequence>METSEEENFGVAVSSPSDAEFDAVVGYLEDIIMDDDFQSIQRTFMEKHYQEFDDSEENKLIYTSIFNEYISLIEKYIEEKLLDRIPGFNMTAFTMSLQQHKDEMAGDIFDMLLTFTDFLAFKEMFLDYRAEKEGRSLDLSGGLVVTSLNKSSVSSS</sequence>
<comment type="function">
    <text evidence="1">Plays a role as an effector of the ADP-ribosylation factor-like protein 2, ARL2.</text>
</comment>
<comment type="subcellular location">
    <subcellularLocation>
        <location evidence="1">Cytoplasm</location>
    </subcellularLocation>
    <subcellularLocation>
        <location evidence="1">Mitochondrion intermembrane space</location>
    </subcellularLocation>
    <subcellularLocation>
        <location evidence="1">Cytoplasm</location>
        <location evidence="1">Cytoskeleton</location>
        <location evidence="1">Microtubule organizing center</location>
        <location evidence="1">Centrosome</location>
    </subcellularLocation>
    <subcellularLocation>
        <location evidence="1">Nucleus</location>
    </subcellularLocation>
    <subcellularLocation>
        <location evidence="1">Cytoplasm</location>
        <location evidence="1">Cytoskeleton</location>
        <location evidence="1">Spindle</location>
    </subcellularLocation>
    <subcellularLocation>
        <location evidence="1">Cytoplasm</location>
        <location evidence="1">Cytoskeleton</location>
        <location evidence="1">Cilium basal body</location>
    </subcellularLocation>
    <text evidence="1">Detected in the midbody matrix. Not detected in the Golgi, nucleus and on the mitotic spindle. Centrosome-associated throughout the cell cycle. Not detected to interphase microtubules. The complex formed with ARL2BP, ARL2 and SLC25A4 is expressed in mitochondria (By similarity).</text>
</comment>
<comment type="similarity">
    <text evidence="2">Belongs to the ARL2BP family.</text>
</comment>
<name>AR2BP_CHICK</name>
<reference key="1">
    <citation type="journal article" date="2005" name="Genome Biol.">
        <title>Full-length cDNAs from chicken bursal lymphocytes to facilitate gene function analysis.</title>
        <authorList>
            <person name="Caldwell R.B."/>
            <person name="Kierzek A.M."/>
            <person name="Arakawa H."/>
            <person name="Bezzubov Y."/>
            <person name="Zaim J."/>
            <person name="Fiedler P."/>
            <person name="Kutter S."/>
            <person name="Blagodatski A."/>
            <person name="Kostovska D."/>
            <person name="Koter M."/>
            <person name="Plachy J."/>
            <person name="Carninci P."/>
            <person name="Hayashizaki Y."/>
            <person name="Buerstedde J.-M."/>
        </authorList>
    </citation>
    <scope>NUCLEOTIDE SEQUENCE [LARGE SCALE MRNA]</scope>
    <source>
        <strain>CB</strain>
        <tissue>Bursa of Fabricius</tissue>
    </source>
</reference>
<proteinExistence type="evidence at transcript level"/>
<gene>
    <name type="primary">ARL2BP</name>
    <name type="ORF">RCJMB04_8o4</name>
</gene>